<dbReference type="EC" id="3.6.5.-" evidence="1"/>
<dbReference type="EMBL" id="CH408155">
    <property type="protein sequence ID" value="EDK36383.2"/>
    <property type="status" value="ALT_INIT"/>
    <property type="molecule type" value="Genomic_DNA"/>
</dbReference>
<dbReference type="RefSeq" id="XP_001487104.1">
    <property type="nucleotide sequence ID" value="XM_001487054.1"/>
</dbReference>
<dbReference type="SMR" id="A5DB26"/>
<dbReference type="FunCoup" id="A5DB26">
    <property type="interactions" value="58"/>
</dbReference>
<dbReference type="STRING" id="294746.A5DB26"/>
<dbReference type="GeneID" id="5129416"/>
<dbReference type="KEGG" id="pgu:PGUG_00481"/>
<dbReference type="eggNOG" id="KOG2203">
    <property type="taxonomic scope" value="Eukaryota"/>
</dbReference>
<dbReference type="HOGENOM" id="CLU_011270_0_0_1"/>
<dbReference type="InParanoid" id="A5DB26"/>
<dbReference type="OrthoDB" id="1597724at2759"/>
<dbReference type="Proteomes" id="UP000001997">
    <property type="component" value="Unassembled WGS sequence"/>
</dbReference>
<dbReference type="GO" id="GO:0005789">
    <property type="term" value="C:endoplasmic reticulum membrane"/>
    <property type="evidence" value="ECO:0007669"/>
    <property type="project" value="UniProtKB-SubCell"/>
</dbReference>
<dbReference type="GO" id="GO:0005525">
    <property type="term" value="F:GTP binding"/>
    <property type="evidence" value="ECO:0007669"/>
    <property type="project" value="UniProtKB-UniRule"/>
</dbReference>
<dbReference type="GO" id="GO:0003924">
    <property type="term" value="F:GTPase activity"/>
    <property type="evidence" value="ECO:0007669"/>
    <property type="project" value="UniProtKB-UniRule"/>
</dbReference>
<dbReference type="GO" id="GO:0016320">
    <property type="term" value="P:endoplasmic reticulum membrane fusion"/>
    <property type="evidence" value="ECO:0007669"/>
    <property type="project" value="TreeGrafter"/>
</dbReference>
<dbReference type="CDD" id="cd01851">
    <property type="entry name" value="GBP"/>
    <property type="match status" value="1"/>
</dbReference>
<dbReference type="FunFam" id="3.40.50.300:FF:000727">
    <property type="entry name" value="Protein SEY1 homolog"/>
    <property type="match status" value="1"/>
</dbReference>
<dbReference type="Gene3D" id="3.40.50.300">
    <property type="entry name" value="P-loop containing nucleotide triphosphate hydrolases"/>
    <property type="match status" value="1"/>
</dbReference>
<dbReference type="HAMAP" id="MF_03109">
    <property type="entry name" value="Sey1"/>
    <property type="match status" value="1"/>
</dbReference>
<dbReference type="InterPro" id="IPR030386">
    <property type="entry name" value="G_GB1_RHD3_dom"/>
</dbReference>
<dbReference type="InterPro" id="IPR027417">
    <property type="entry name" value="P-loop_NTPase"/>
</dbReference>
<dbReference type="InterPro" id="IPR008803">
    <property type="entry name" value="RHD3/Sey1"/>
</dbReference>
<dbReference type="InterPro" id="IPR046758">
    <property type="entry name" value="Sey1/RHD3-like_3HB"/>
</dbReference>
<dbReference type="PANTHER" id="PTHR45923">
    <property type="entry name" value="PROTEIN SEY1"/>
    <property type="match status" value="1"/>
</dbReference>
<dbReference type="PANTHER" id="PTHR45923:SF2">
    <property type="entry name" value="PROTEIN SEY1"/>
    <property type="match status" value="1"/>
</dbReference>
<dbReference type="Pfam" id="PF05879">
    <property type="entry name" value="RHD3_GTPase"/>
    <property type="match status" value="1"/>
</dbReference>
<dbReference type="Pfam" id="PF20428">
    <property type="entry name" value="Sey1_3HB"/>
    <property type="match status" value="1"/>
</dbReference>
<dbReference type="SUPFAM" id="SSF52540">
    <property type="entry name" value="P-loop containing nucleoside triphosphate hydrolases"/>
    <property type="match status" value="1"/>
</dbReference>
<dbReference type="PROSITE" id="PS51715">
    <property type="entry name" value="G_GB1_RHD3"/>
    <property type="match status" value="1"/>
</dbReference>
<organism>
    <name type="scientific">Meyerozyma guilliermondii (strain ATCC 6260 / CBS 566 / DSM 6381 / JCM 1539 / NBRC 10279 / NRRL Y-324)</name>
    <name type="common">Yeast</name>
    <name type="synonym">Candida guilliermondii</name>
    <dbReference type="NCBI Taxonomy" id="294746"/>
    <lineage>
        <taxon>Eukaryota</taxon>
        <taxon>Fungi</taxon>
        <taxon>Dikarya</taxon>
        <taxon>Ascomycota</taxon>
        <taxon>Saccharomycotina</taxon>
        <taxon>Pichiomycetes</taxon>
        <taxon>Debaryomycetaceae</taxon>
        <taxon>Meyerozyma</taxon>
    </lineage>
</organism>
<comment type="function">
    <text evidence="1">Cooperates with the reticulon proteins and tubule-shaping DP1 family proteins to generate and maintain the structure of the tubular endoplasmic reticulum network. Has GTPase activity, which is required for its function in ER organization.</text>
</comment>
<comment type="subcellular location">
    <subcellularLocation>
        <location evidence="1">Endoplasmic reticulum membrane</location>
        <topology evidence="1">Multi-pass membrane protein</topology>
    </subcellularLocation>
    <text evidence="1">Enriched in the cortical ER. Concentrated in punctae along the ER tubules.</text>
</comment>
<comment type="similarity">
    <text evidence="2">Belongs to the TRAFAC class dynamin-like GTPase superfamily. GB1/RHD3 GTPase family. RHD3 subfamily.</text>
</comment>
<comment type="sequence caution" evidence="4">
    <conflict type="erroneous initiation">
        <sequence resource="EMBL-CDS" id="EDK36383"/>
    </conflict>
</comment>
<feature type="chain" id="PRO_0000384995" description="Protein SEY1">
    <location>
        <begin position="1"/>
        <end position="850"/>
    </location>
</feature>
<feature type="topological domain" description="Cytoplasmic" evidence="1">
    <location>
        <begin position="1"/>
        <end position="741"/>
    </location>
</feature>
<feature type="transmembrane region" description="Helical" evidence="1">
    <location>
        <begin position="742"/>
        <end position="762"/>
    </location>
</feature>
<feature type="topological domain" description="Lumenal" evidence="1">
    <location>
        <begin position="763"/>
        <end position="765"/>
    </location>
</feature>
<feature type="transmembrane region" description="Helical" evidence="1">
    <location>
        <begin position="766"/>
        <end position="786"/>
    </location>
</feature>
<feature type="topological domain" description="Cytoplasmic" evidence="1">
    <location>
        <begin position="787"/>
        <end position="850"/>
    </location>
</feature>
<feature type="domain" description="GB1/RHD3-type G" evidence="2">
    <location>
        <begin position="64"/>
        <end position="297"/>
    </location>
</feature>
<feature type="region of interest" description="Disordered" evidence="3">
    <location>
        <begin position="1"/>
        <end position="27"/>
    </location>
</feature>
<feature type="region of interest" description="Disordered" evidence="3">
    <location>
        <begin position="816"/>
        <end position="850"/>
    </location>
</feature>
<feature type="compositionally biased region" description="Low complexity" evidence="3">
    <location>
        <begin position="12"/>
        <end position="27"/>
    </location>
</feature>
<feature type="binding site" evidence="1">
    <location>
        <begin position="74"/>
        <end position="81"/>
    </location>
    <ligand>
        <name>GTP</name>
        <dbReference type="ChEBI" id="CHEBI:37565"/>
    </ligand>
</feature>
<reference key="1">
    <citation type="journal article" date="2009" name="Nature">
        <title>Evolution of pathogenicity and sexual reproduction in eight Candida genomes.</title>
        <authorList>
            <person name="Butler G."/>
            <person name="Rasmussen M.D."/>
            <person name="Lin M.F."/>
            <person name="Santos M.A.S."/>
            <person name="Sakthikumar S."/>
            <person name="Munro C.A."/>
            <person name="Rheinbay E."/>
            <person name="Grabherr M."/>
            <person name="Forche A."/>
            <person name="Reedy J.L."/>
            <person name="Agrafioti I."/>
            <person name="Arnaud M.B."/>
            <person name="Bates S."/>
            <person name="Brown A.J.P."/>
            <person name="Brunke S."/>
            <person name="Costanzo M.C."/>
            <person name="Fitzpatrick D.A."/>
            <person name="de Groot P.W.J."/>
            <person name="Harris D."/>
            <person name="Hoyer L.L."/>
            <person name="Hube B."/>
            <person name="Klis F.M."/>
            <person name="Kodira C."/>
            <person name="Lennard N."/>
            <person name="Logue M.E."/>
            <person name="Martin R."/>
            <person name="Neiman A.M."/>
            <person name="Nikolaou E."/>
            <person name="Quail M.A."/>
            <person name="Quinn J."/>
            <person name="Santos M.C."/>
            <person name="Schmitzberger F.F."/>
            <person name="Sherlock G."/>
            <person name="Shah P."/>
            <person name="Silverstein K.A.T."/>
            <person name="Skrzypek M.S."/>
            <person name="Soll D."/>
            <person name="Staggs R."/>
            <person name="Stansfield I."/>
            <person name="Stumpf M.P.H."/>
            <person name="Sudbery P.E."/>
            <person name="Srikantha T."/>
            <person name="Zeng Q."/>
            <person name="Berman J."/>
            <person name="Berriman M."/>
            <person name="Heitman J."/>
            <person name="Gow N.A.R."/>
            <person name="Lorenz M.C."/>
            <person name="Birren B.W."/>
            <person name="Kellis M."/>
            <person name="Cuomo C.A."/>
        </authorList>
    </citation>
    <scope>NUCLEOTIDE SEQUENCE [LARGE SCALE GENOMIC DNA]</scope>
    <source>
        <strain>ATCC 6260 / CBS 566 / DSM 6381 / JCM 1539 / NBRC 10279 / NRRL Y-324</strain>
    </source>
</reference>
<accession>A5DB26</accession>
<proteinExistence type="inferred from homology"/>
<sequence length="850" mass="96739">MSDLPPPDLGSEEISVSPTSSSSSFVPIDKNQLQDAVQVVSEAKEFNSLILDYVRKATPASEVNNNYHIVSVFGSQSTGKSTLLNRLFNTNFDVMDESNRSQTTKGIWMAYSSIITTSQGPVPSKGGENIFVMDVEGTDGRERGEDQDFERKAALFALSTSEVLIINVWEHQIGLYQGANMGLLKTVFEVNLSLFGRTKLEMNEHKVLLLFVIRDHIGTTSKESLAATVTQDLIKMWDSLSKPQELAHLQFSDFFDIQFHTLRHKILQPGEFTTDVQLLGDRFTDHKNEDFLFKKYYHHDIPIDGWTMYAENCWDQIDKNKDLDLPTQQILVAKFKCDEILTSVFEEFRSKFEERHAKYAPTDIKEEVDYEELGGSLGDLKEDTLENYDMMASRYNQSVYLQKRKTLEQKITDVYQDLVDQHGAHMVSKLSAKFASSLSSKKLPKDVSFALATEALRKDIVHQFLKNCSCITLNGSLDHAKHVTSFTRKLDSILSKQRFVELNSILAKSLKKVESAVAKAITQEISEPSESTWDRVLEKFKGAQDEYFYSKYETATGVDFGLGTSASVNERALEKFQFRAWSLLHLQMRKLISKDNLVIILKDRFEDKFRYDENGIPRLYQNSHELELNFTAAKEHALKALPILTLATLSDGTTIVPKYDVRDKRLQKKLGAAFDTTGEVDLKDEDVESDTDEEDEDENEPKCFAEAISETDKASVLSKFKKETDATFVESKRALIQHVTHIPYYIYIVILVLGWNEFMAVLRNPFFFTLLLMLGAGTYVLYHLNLLKPAMVVVQRMFDECLVIAKQKLKEFIDEQPQEHAKRLSKMAGITEDKPEEIEMSDLTPPGEGS</sequence>
<gene>
    <name evidence="1" type="primary">SEY1</name>
    <name type="ORF">PGUG_00481</name>
</gene>
<evidence type="ECO:0000255" key="1">
    <source>
        <dbReference type="HAMAP-Rule" id="MF_03109"/>
    </source>
</evidence>
<evidence type="ECO:0000255" key="2">
    <source>
        <dbReference type="PROSITE-ProRule" id="PRU01052"/>
    </source>
</evidence>
<evidence type="ECO:0000256" key="3">
    <source>
        <dbReference type="SAM" id="MobiDB-lite"/>
    </source>
</evidence>
<evidence type="ECO:0000305" key="4"/>
<name>SEY1_PICGU</name>
<keyword id="KW-0256">Endoplasmic reticulum</keyword>
<keyword id="KW-0342">GTP-binding</keyword>
<keyword id="KW-0378">Hydrolase</keyword>
<keyword id="KW-0472">Membrane</keyword>
<keyword id="KW-0547">Nucleotide-binding</keyword>
<keyword id="KW-1185">Reference proteome</keyword>
<keyword id="KW-0812">Transmembrane</keyword>
<keyword id="KW-1133">Transmembrane helix</keyword>
<protein>
    <recommendedName>
        <fullName evidence="1">Protein SEY1</fullName>
        <ecNumber evidence="1">3.6.5.-</ecNumber>
    </recommendedName>
</protein>